<keyword id="KW-0175">Coiled coil</keyword>
<keyword id="KW-0256">Endoplasmic reticulum</keyword>
<keyword id="KW-0472">Membrane</keyword>
<keyword id="KW-1185">Reference proteome</keyword>
<keyword id="KW-0812">Transmembrane</keyword>
<keyword id="KW-1133">Transmembrane helix</keyword>
<keyword id="KW-0813">Transport</keyword>
<feature type="chain" id="PRO_0000388619" description="Protein get1">
    <location>
        <begin position="1"/>
        <end position="200"/>
    </location>
</feature>
<feature type="topological domain" description="Lumenal" evidence="1">
    <location>
        <begin position="1"/>
        <end position="4"/>
    </location>
</feature>
<feature type="transmembrane region" description="Helical" evidence="1">
    <location>
        <begin position="5"/>
        <end position="24"/>
    </location>
</feature>
<feature type="topological domain" description="Cytoplasmic" evidence="1">
    <location>
        <begin position="25"/>
        <end position="110"/>
    </location>
</feature>
<feature type="transmembrane region" description="Helical" evidence="1">
    <location>
        <begin position="111"/>
        <end position="131"/>
    </location>
</feature>
<feature type="topological domain" description="Lumenal" evidence="1">
    <location>
        <begin position="132"/>
        <end position="155"/>
    </location>
</feature>
<feature type="transmembrane region" description="Helical" evidence="1">
    <location>
        <begin position="156"/>
        <end position="172"/>
    </location>
</feature>
<feature type="topological domain" description="Cytoplasmic" evidence="1">
    <location>
        <begin position="173"/>
        <end position="200"/>
    </location>
</feature>
<feature type="coiled-coil region" evidence="1">
    <location>
        <begin position="45"/>
        <end position="97"/>
    </location>
</feature>
<reference key="1">
    <citation type="journal article" date="2015" name="Genome Announc.">
        <title>Genome sequence of the AIDS-associated pathogen Penicillium marneffei (ATCC18224) and its near taxonomic relative Talaromyces stipitatus (ATCC10500).</title>
        <authorList>
            <person name="Nierman W.C."/>
            <person name="Fedorova-Abrams N.D."/>
            <person name="Andrianopoulos A."/>
        </authorList>
    </citation>
    <scope>NUCLEOTIDE SEQUENCE [LARGE SCALE GENOMIC DNA]</scope>
    <source>
        <strain>ATCC 10500 / CBS 375.48 / QM 6759 / NRRL 1006</strain>
    </source>
</reference>
<gene>
    <name type="primary">get1</name>
    <name type="ORF">TSTA_071190</name>
</gene>
<name>GET1_TALSN</name>
<proteinExistence type="inferred from homology"/>
<sequence length="200" mass="22690">MISFLLLIFLIQLAIYIVNTIGASTVDDLLWILYLRLPSSISKDARKHGELKRDVVQLKREMNATSSQDEFAKWAKLRRRHDKAMEEYEAMNRSMGSRKTSFQYSVKIARWLTLNGPRLFIQFYYTKTPVFDLPPGWFPYPVEWILSFPRAPLGTVSIQVWSSACATAISLTGNVVIAALQKSGQASMRQAQAIPAGKSE</sequence>
<evidence type="ECO:0000255" key="1">
    <source>
        <dbReference type="HAMAP-Rule" id="MF_03113"/>
    </source>
</evidence>
<comment type="function">
    <text evidence="1">Required for the post-translational delivery of tail-anchored (TA) proteins to the endoplasmic reticulum. Acts as a membrane receptor for soluble get3, which recognizes and selectively binds the transmembrane domain of TA proteins in the cytosol.</text>
</comment>
<comment type="subunit">
    <text evidence="1">Interacts with get3.</text>
</comment>
<comment type="subcellular location">
    <subcellularLocation>
        <location evidence="1">Endoplasmic reticulum membrane</location>
        <topology evidence="1">Multi-pass membrane protein</topology>
    </subcellularLocation>
</comment>
<comment type="similarity">
    <text evidence="1">Belongs to the WRB/GET1 family.</text>
</comment>
<organism>
    <name type="scientific">Talaromyces stipitatus (strain ATCC 10500 / CBS 375.48 / QM 6759 / NRRL 1006)</name>
    <name type="common">Penicillium stipitatum</name>
    <dbReference type="NCBI Taxonomy" id="441959"/>
    <lineage>
        <taxon>Eukaryota</taxon>
        <taxon>Fungi</taxon>
        <taxon>Dikarya</taxon>
        <taxon>Ascomycota</taxon>
        <taxon>Pezizomycotina</taxon>
        <taxon>Eurotiomycetes</taxon>
        <taxon>Eurotiomycetidae</taxon>
        <taxon>Eurotiales</taxon>
        <taxon>Trichocomaceae</taxon>
        <taxon>Talaromyces</taxon>
        <taxon>Talaromyces sect. Talaromyces</taxon>
    </lineage>
</organism>
<dbReference type="EMBL" id="EQ962652">
    <property type="protein sequence ID" value="EED23716.1"/>
    <property type="molecule type" value="Genomic_DNA"/>
</dbReference>
<dbReference type="RefSeq" id="XP_002341103.1">
    <property type="nucleotide sequence ID" value="XM_002341062.1"/>
</dbReference>
<dbReference type="SMR" id="B8LUE3"/>
<dbReference type="STRING" id="441959.B8LUE3"/>
<dbReference type="GeneID" id="8106016"/>
<dbReference type="VEuPathDB" id="FungiDB:TSTA_071190"/>
<dbReference type="eggNOG" id="KOG4253">
    <property type="taxonomic scope" value="Eukaryota"/>
</dbReference>
<dbReference type="HOGENOM" id="CLU_089418_1_0_1"/>
<dbReference type="InParanoid" id="B8LUE3"/>
<dbReference type="OMA" id="AEWIISF"/>
<dbReference type="OrthoDB" id="69461at2759"/>
<dbReference type="PhylomeDB" id="B8LUE3"/>
<dbReference type="Proteomes" id="UP000001745">
    <property type="component" value="Unassembled WGS sequence"/>
</dbReference>
<dbReference type="GO" id="GO:0005789">
    <property type="term" value="C:endoplasmic reticulum membrane"/>
    <property type="evidence" value="ECO:0007669"/>
    <property type="project" value="UniProtKB-SubCell"/>
</dbReference>
<dbReference type="GO" id="GO:0043529">
    <property type="term" value="C:GET complex"/>
    <property type="evidence" value="ECO:0007669"/>
    <property type="project" value="InterPro"/>
</dbReference>
<dbReference type="GO" id="GO:0043495">
    <property type="term" value="F:protein-membrane adaptor activity"/>
    <property type="evidence" value="ECO:0007669"/>
    <property type="project" value="TreeGrafter"/>
</dbReference>
<dbReference type="GO" id="GO:0071816">
    <property type="term" value="P:tail-anchored membrane protein insertion into ER membrane"/>
    <property type="evidence" value="ECO:0007669"/>
    <property type="project" value="InterPro"/>
</dbReference>
<dbReference type="FunFam" id="1.10.287.660:FF:000006">
    <property type="entry name" value="Protein GET1"/>
    <property type="match status" value="1"/>
</dbReference>
<dbReference type="Gene3D" id="1.10.287.660">
    <property type="entry name" value="Helix hairpin bin"/>
    <property type="match status" value="1"/>
</dbReference>
<dbReference type="HAMAP" id="MF_03113">
    <property type="entry name" value="Get1"/>
    <property type="match status" value="1"/>
</dbReference>
<dbReference type="InterPro" id="IPR028945">
    <property type="entry name" value="Get1"/>
</dbReference>
<dbReference type="InterPro" id="IPR027538">
    <property type="entry name" value="Get1_fungi"/>
</dbReference>
<dbReference type="InterPro" id="IPR029012">
    <property type="entry name" value="Helix_hairpin_bin_sf"/>
</dbReference>
<dbReference type="PANTHER" id="PTHR42650:SF1">
    <property type="entry name" value="GUIDED ENTRY OF TAIL-ANCHORED PROTEINS FACTOR 1"/>
    <property type="match status" value="1"/>
</dbReference>
<dbReference type="PANTHER" id="PTHR42650">
    <property type="entry name" value="TAIL-ANCHORED PROTEIN INSERTION RECEPTOR WRB"/>
    <property type="match status" value="1"/>
</dbReference>
<dbReference type="Pfam" id="PF04420">
    <property type="entry name" value="CHD5"/>
    <property type="match status" value="1"/>
</dbReference>
<protein>
    <recommendedName>
        <fullName evidence="1">Protein get1</fullName>
    </recommendedName>
    <alternativeName>
        <fullName evidence="1">Guided entry of tail-anchored proteins 1</fullName>
    </alternativeName>
</protein>
<accession>B8LUE3</accession>